<gene>
    <name evidence="1" type="primary">rsmH</name>
    <name type="synonym">mraW</name>
    <name type="ordered locus">xcc-b100_3638</name>
</gene>
<name>RSMH_XANCB</name>
<accession>B0RVB2</accession>
<feature type="chain" id="PRO_0000387213" description="Ribosomal RNA small subunit methyltransferase H">
    <location>
        <begin position="1"/>
        <end position="342"/>
    </location>
</feature>
<feature type="region of interest" description="Disordered" evidence="2">
    <location>
        <begin position="309"/>
        <end position="342"/>
    </location>
</feature>
<feature type="compositionally biased region" description="Polar residues" evidence="2">
    <location>
        <begin position="333"/>
        <end position="342"/>
    </location>
</feature>
<feature type="binding site" evidence="1">
    <location>
        <begin position="36"/>
        <end position="38"/>
    </location>
    <ligand>
        <name>S-adenosyl-L-methionine</name>
        <dbReference type="ChEBI" id="CHEBI:59789"/>
    </ligand>
</feature>
<feature type="binding site" evidence="1">
    <location>
        <position position="56"/>
    </location>
    <ligand>
        <name>S-adenosyl-L-methionine</name>
        <dbReference type="ChEBI" id="CHEBI:59789"/>
    </ligand>
</feature>
<feature type="binding site" evidence="1">
    <location>
        <position position="82"/>
    </location>
    <ligand>
        <name>S-adenosyl-L-methionine</name>
        <dbReference type="ChEBI" id="CHEBI:59789"/>
    </ligand>
</feature>
<feature type="binding site" evidence="1">
    <location>
        <position position="100"/>
    </location>
    <ligand>
        <name>S-adenosyl-L-methionine</name>
        <dbReference type="ChEBI" id="CHEBI:59789"/>
    </ligand>
</feature>
<feature type="binding site" evidence="1">
    <location>
        <position position="107"/>
    </location>
    <ligand>
        <name>S-adenosyl-L-methionine</name>
        <dbReference type="ChEBI" id="CHEBI:59789"/>
    </ligand>
</feature>
<organism>
    <name type="scientific">Xanthomonas campestris pv. campestris (strain B100)</name>
    <dbReference type="NCBI Taxonomy" id="509169"/>
    <lineage>
        <taxon>Bacteria</taxon>
        <taxon>Pseudomonadati</taxon>
        <taxon>Pseudomonadota</taxon>
        <taxon>Gammaproteobacteria</taxon>
        <taxon>Lysobacterales</taxon>
        <taxon>Lysobacteraceae</taxon>
        <taxon>Xanthomonas</taxon>
    </lineage>
</organism>
<reference key="1">
    <citation type="journal article" date="2008" name="J. Biotechnol.">
        <title>The genome of Xanthomonas campestris pv. campestris B100 and its use for the reconstruction of metabolic pathways involved in xanthan biosynthesis.</title>
        <authorList>
            <person name="Vorhoelter F.-J."/>
            <person name="Schneiker S."/>
            <person name="Goesmann A."/>
            <person name="Krause L."/>
            <person name="Bekel T."/>
            <person name="Kaiser O."/>
            <person name="Linke B."/>
            <person name="Patschkowski T."/>
            <person name="Rueckert C."/>
            <person name="Schmid J."/>
            <person name="Sidhu V.K."/>
            <person name="Sieber V."/>
            <person name="Tauch A."/>
            <person name="Watt S.A."/>
            <person name="Weisshaar B."/>
            <person name="Becker A."/>
            <person name="Niehaus K."/>
            <person name="Puehler A."/>
        </authorList>
    </citation>
    <scope>NUCLEOTIDE SEQUENCE [LARGE SCALE GENOMIC DNA]</scope>
    <source>
        <strain>B100</strain>
    </source>
</reference>
<comment type="function">
    <text evidence="1">Specifically methylates the N4 position of cytidine in position 1402 (C1402) of 16S rRNA.</text>
</comment>
<comment type="catalytic activity">
    <reaction evidence="1">
        <text>cytidine(1402) in 16S rRNA + S-adenosyl-L-methionine = N(4)-methylcytidine(1402) in 16S rRNA + S-adenosyl-L-homocysteine + H(+)</text>
        <dbReference type="Rhea" id="RHEA:42928"/>
        <dbReference type="Rhea" id="RHEA-COMP:10286"/>
        <dbReference type="Rhea" id="RHEA-COMP:10287"/>
        <dbReference type="ChEBI" id="CHEBI:15378"/>
        <dbReference type="ChEBI" id="CHEBI:57856"/>
        <dbReference type="ChEBI" id="CHEBI:59789"/>
        <dbReference type="ChEBI" id="CHEBI:74506"/>
        <dbReference type="ChEBI" id="CHEBI:82748"/>
        <dbReference type="EC" id="2.1.1.199"/>
    </reaction>
</comment>
<comment type="subcellular location">
    <subcellularLocation>
        <location evidence="1">Cytoplasm</location>
    </subcellularLocation>
</comment>
<comment type="similarity">
    <text evidence="1">Belongs to the methyltransferase superfamily. RsmH family.</text>
</comment>
<proteinExistence type="inferred from homology"/>
<dbReference type="EC" id="2.1.1.199" evidence="1"/>
<dbReference type="EMBL" id="AM920689">
    <property type="protein sequence ID" value="CAP53003.1"/>
    <property type="molecule type" value="Genomic_DNA"/>
</dbReference>
<dbReference type="SMR" id="B0RVB2"/>
<dbReference type="KEGG" id="xca:xcc-b100_3638"/>
<dbReference type="HOGENOM" id="CLU_038422_2_0_6"/>
<dbReference type="Proteomes" id="UP000001188">
    <property type="component" value="Chromosome"/>
</dbReference>
<dbReference type="GO" id="GO:0005737">
    <property type="term" value="C:cytoplasm"/>
    <property type="evidence" value="ECO:0007669"/>
    <property type="project" value="UniProtKB-SubCell"/>
</dbReference>
<dbReference type="GO" id="GO:0071424">
    <property type="term" value="F:rRNA (cytosine-N4-)-methyltransferase activity"/>
    <property type="evidence" value="ECO:0007669"/>
    <property type="project" value="UniProtKB-UniRule"/>
</dbReference>
<dbReference type="GO" id="GO:0070475">
    <property type="term" value="P:rRNA base methylation"/>
    <property type="evidence" value="ECO:0007669"/>
    <property type="project" value="UniProtKB-UniRule"/>
</dbReference>
<dbReference type="FunFam" id="1.10.150.170:FF:000001">
    <property type="entry name" value="Ribosomal RNA small subunit methyltransferase H"/>
    <property type="match status" value="1"/>
</dbReference>
<dbReference type="Gene3D" id="1.10.150.170">
    <property type="entry name" value="Putative methyltransferase TM0872, insert domain"/>
    <property type="match status" value="1"/>
</dbReference>
<dbReference type="Gene3D" id="3.40.50.150">
    <property type="entry name" value="Vaccinia Virus protein VP39"/>
    <property type="match status" value="1"/>
</dbReference>
<dbReference type="HAMAP" id="MF_01007">
    <property type="entry name" value="16SrRNA_methyltr_H"/>
    <property type="match status" value="1"/>
</dbReference>
<dbReference type="InterPro" id="IPR002903">
    <property type="entry name" value="RsmH"/>
</dbReference>
<dbReference type="InterPro" id="IPR023397">
    <property type="entry name" value="SAM-dep_MeTrfase_MraW_recog"/>
</dbReference>
<dbReference type="InterPro" id="IPR029063">
    <property type="entry name" value="SAM-dependent_MTases_sf"/>
</dbReference>
<dbReference type="NCBIfam" id="TIGR00006">
    <property type="entry name" value="16S rRNA (cytosine(1402)-N(4))-methyltransferase RsmH"/>
    <property type="match status" value="1"/>
</dbReference>
<dbReference type="PANTHER" id="PTHR11265:SF0">
    <property type="entry name" value="12S RRNA N4-METHYLCYTIDINE METHYLTRANSFERASE"/>
    <property type="match status" value="1"/>
</dbReference>
<dbReference type="PANTHER" id="PTHR11265">
    <property type="entry name" value="S-ADENOSYL-METHYLTRANSFERASE MRAW"/>
    <property type="match status" value="1"/>
</dbReference>
<dbReference type="Pfam" id="PF01795">
    <property type="entry name" value="Methyltransf_5"/>
    <property type="match status" value="1"/>
</dbReference>
<dbReference type="PIRSF" id="PIRSF004486">
    <property type="entry name" value="MraW"/>
    <property type="match status" value="1"/>
</dbReference>
<dbReference type="SUPFAM" id="SSF81799">
    <property type="entry name" value="Putative methyltransferase TM0872, insert domain"/>
    <property type="match status" value="1"/>
</dbReference>
<dbReference type="SUPFAM" id="SSF53335">
    <property type="entry name" value="S-adenosyl-L-methionine-dependent methyltransferases"/>
    <property type="match status" value="1"/>
</dbReference>
<evidence type="ECO:0000255" key="1">
    <source>
        <dbReference type="HAMAP-Rule" id="MF_01007"/>
    </source>
</evidence>
<evidence type="ECO:0000256" key="2">
    <source>
        <dbReference type="SAM" id="MobiDB-lite"/>
    </source>
</evidence>
<protein>
    <recommendedName>
        <fullName evidence="1">Ribosomal RNA small subunit methyltransferase H</fullName>
        <ecNumber evidence="1">2.1.1.199</ecNumber>
    </recommendedName>
    <alternativeName>
        <fullName evidence="1">16S rRNA m(4)C1402 methyltransferase</fullName>
    </alternativeName>
    <alternativeName>
        <fullName evidence="1">rRNA (cytosine-N(4)-)-methyltransferase RsmH</fullName>
    </alternativeName>
</protein>
<keyword id="KW-0963">Cytoplasm</keyword>
<keyword id="KW-0489">Methyltransferase</keyword>
<keyword id="KW-0698">rRNA processing</keyword>
<keyword id="KW-0949">S-adenosyl-L-methionine</keyword>
<keyword id="KW-0808">Transferase</keyword>
<sequence length="342" mass="36350">MSQPPAAHVPVLYTQVLEGLQVTENGTYLDGTFGRGGHARGVLEHLGPGGRLLVMDKDPEAIAVAEHTFGGDARVSIHRGSFAGLGQVVAAATVDGILLDLGVSSPQLDVAGRGFSFGKDGPLDMRMDPDSGQSAAGWLAQATDREIADVLWTYGEERQSRRIARAIVARRGEQPLLRTAQLADLIASVMPRGDSKTHPATRSFQAIRIHINRELADLEAGLDAALGALKPGGRLAVISFHSLEDRIVKQFMARYAKAPPSNRRLPEAQPFVPTLQLVSGAIKADDSELAVNPRARSAVLRVAEKLGMENRESGMGKGHGAAASRFPTPDSRFPTSPNGDAP</sequence>